<evidence type="ECO:0000269" key="1">
    <source>
    </source>
</evidence>
<evidence type="ECO:0000305" key="2"/>
<comment type="function">
    <text>This is an intracellular thiol proteinase inhibitor.</text>
</comment>
<comment type="subcellular location">
    <subcellularLocation>
        <location>Cytoplasm</location>
    </subcellularLocation>
</comment>
<comment type="similarity">
    <text evidence="2">Belongs to the cystatin family.</text>
</comment>
<reference key="1">
    <citation type="journal article" date="1984" name="Biochem. Biophys. Res. Commun.">
        <title>Amino acid sequence of rat epidermal thiol proteinase inhibitor.</title>
        <authorList>
            <person name="Takio K."/>
            <person name="Kominami E."/>
            <person name="Bando Y."/>
            <person name="Katunuma N."/>
            <person name="Titani K."/>
        </authorList>
    </citation>
    <scope>PROTEIN SEQUENCE</scope>
    <scope>ACETYLATION AT MET-1</scope>
</reference>
<reference key="2">
    <citation type="journal article" date="1990" name="Biol. Chem. Hoppe-Seyler">
        <title>Evidence of protease activity producing NH2-terminal truncated form of rat cystatin A in newborn rat epidermis.</title>
        <authorList>
            <person name="Takeda A."/>
            <person name="Nakamura Y."/>
            <person name="Kaji H."/>
            <person name="Samejima T."/>
        </authorList>
    </citation>
    <scope>PROTEIN SEQUENCE OF 7-10</scope>
</reference>
<accession>P01039</accession>
<protein>
    <recommendedName>
        <fullName>Cystatin-A</fullName>
    </recommendedName>
    <alternativeName>
        <fullName>Cystatin-alpha</fullName>
    </alternativeName>
    <alternativeName>
        <fullName>Epidermal stefin</fullName>
    </alternativeName>
    <alternativeName>
        <fullName>Epidermal thiol proteinase inhibitor</fullName>
    </alternativeName>
</protein>
<organism>
    <name type="scientific">Rattus norvegicus</name>
    <name type="common">Rat</name>
    <dbReference type="NCBI Taxonomy" id="10116"/>
    <lineage>
        <taxon>Eukaryota</taxon>
        <taxon>Metazoa</taxon>
        <taxon>Chordata</taxon>
        <taxon>Craniata</taxon>
        <taxon>Vertebrata</taxon>
        <taxon>Euteleostomi</taxon>
        <taxon>Mammalia</taxon>
        <taxon>Eutheria</taxon>
        <taxon>Euarchontoglires</taxon>
        <taxon>Glires</taxon>
        <taxon>Rodentia</taxon>
        <taxon>Myomorpha</taxon>
        <taxon>Muroidea</taxon>
        <taxon>Muridae</taxon>
        <taxon>Murinae</taxon>
        <taxon>Rattus</taxon>
    </lineage>
</organism>
<keyword id="KW-0007">Acetylation</keyword>
<keyword id="KW-0963">Cytoplasm</keyword>
<keyword id="KW-0903">Direct protein sequencing</keyword>
<keyword id="KW-0646">Protease inhibitor</keyword>
<keyword id="KW-1185">Reference proteome</keyword>
<keyword id="KW-0789">Thiol protease inhibitor</keyword>
<dbReference type="PIR" id="A01275">
    <property type="entry name" value="UDRTS2"/>
</dbReference>
<dbReference type="RefSeq" id="NP_001099347.1">
    <property type="nucleotide sequence ID" value="NM_001105877.1"/>
</dbReference>
<dbReference type="SMR" id="P01039"/>
<dbReference type="FunCoup" id="P01039">
    <property type="interactions" value="97"/>
</dbReference>
<dbReference type="STRING" id="10116.ENSRNOP00000043059"/>
<dbReference type="MEROPS" id="I25.001"/>
<dbReference type="iPTMnet" id="P01039"/>
<dbReference type="PhosphoSitePlus" id="P01039"/>
<dbReference type="PaxDb" id="10116-ENSRNOP00000043059"/>
<dbReference type="Ensembl" id="ENSRNOT00000051936.5">
    <property type="protein sequence ID" value="ENSRNOP00000043059.3"/>
    <property type="gene ID" value="ENSRNOG00000033933.5"/>
</dbReference>
<dbReference type="GeneID" id="288075"/>
<dbReference type="KEGG" id="rno:288075"/>
<dbReference type="UCSC" id="RGD:1309603">
    <property type="organism name" value="rat"/>
</dbReference>
<dbReference type="AGR" id="RGD:1307831"/>
<dbReference type="CTD" id="20863"/>
<dbReference type="RGD" id="1309603">
    <property type="gene designation" value="Csta"/>
</dbReference>
<dbReference type="eggNOG" id="ENOG502SF2X">
    <property type="taxonomic scope" value="Eukaryota"/>
</dbReference>
<dbReference type="GeneTree" id="ENSGT00940000155717"/>
<dbReference type="HOGENOM" id="CLU_150234_2_0_1"/>
<dbReference type="InParanoid" id="P01039"/>
<dbReference type="OMA" id="EICIHIM"/>
<dbReference type="OrthoDB" id="2429551at2759"/>
<dbReference type="PhylomeDB" id="P01039"/>
<dbReference type="TreeFam" id="TF333174"/>
<dbReference type="PRO" id="PR:P01039"/>
<dbReference type="Proteomes" id="UP000002494">
    <property type="component" value="Chromosome 11"/>
</dbReference>
<dbReference type="Bgee" id="ENSRNOG00000033933">
    <property type="expression patterns" value="Expressed in esophagus and 11 other cell types or tissues"/>
</dbReference>
<dbReference type="GO" id="GO:0001533">
    <property type="term" value="C:cornified envelope"/>
    <property type="evidence" value="ECO:0000266"/>
    <property type="project" value="RGD"/>
</dbReference>
<dbReference type="GO" id="GO:0005737">
    <property type="term" value="C:cytoplasm"/>
    <property type="evidence" value="ECO:0000266"/>
    <property type="project" value="RGD"/>
</dbReference>
<dbReference type="GO" id="GO:0005829">
    <property type="term" value="C:cytosol"/>
    <property type="evidence" value="ECO:0000318"/>
    <property type="project" value="GO_Central"/>
</dbReference>
<dbReference type="GO" id="GO:0005615">
    <property type="term" value="C:extracellular space"/>
    <property type="evidence" value="ECO:0000266"/>
    <property type="project" value="RGD"/>
</dbReference>
<dbReference type="GO" id="GO:1904090">
    <property type="term" value="C:peptidase inhibitor complex"/>
    <property type="evidence" value="ECO:0000266"/>
    <property type="project" value="RGD"/>
</dbReference>
<dbReference type="GO" id="GO:0004869">
    <property type="term" value="F:cysteine-type endopeptidase inhibitor activity"/>
    <property type="evidence" value="ECO:0000266"/>
    <property type="project" value="RGD"/>
</dbReference>
<dbReference type="GO" id="GO:0002020">
    <property type="term" value="F:protease binding"/>
    <property type="evidence" value="ECO:0000266"/>
    <property type="project" value="RGD"/>
</dbReference>
<dbReference type="GO" id="GO:0098609">
    <property type="term" value="P:cell-cell adhesion"/>
    <property type="evidence" value="ECO:0000266"/>
    <property type="project" value="RGD"/>
</dbReference>
<dbReference type="GO" id="GO:0030216">
    <property type="term" value="P:keratinocyte differentiation"/>
    <property type="evidence" value="ECO:0000266"/>
    <property type="project" value="RGD"/>
</dbReference>
<dbReference type="GO" id="GO:0045861">
    <property type="term" value="P:negative regulation of proteolysis"/>
    <property type="evidence" value="ECO:0000266"/>
    <property type="project" value="RGD"/>
</dbReference>
<dbReference type="CDD" id="cd00042">
    <property type="entry name" value="CY"/>
    <property type="match status" value="1"/>
</dbReference>
<dbReference type="FunFam" id="3.10.450.10:FF:000001">
    <property type="entry name" value="Cystatin-A"/>
    <property type="match status" value="1"/>
</dbReference>
<dbReference type="Gene3D" id="3.10.450.10">
    <property type="match status" value="1"/>
</dbReference>
<dbReference type="InterPro" id="IPR000010">
    <property type="entry name" value="Cystatin_dom"/>
</dbReference>
<dbReference type="InterPro" id="IPR046350">
    <property type="entry name" value="Cystatin_sf"/>
</dbReference>
<dbReference type="InterPro" id="IPR018073">
    <property type="entry name" value="Prot_inh_cystat_CS"/>
</dbReference>
<dbReference type="InterPro" id="IPR001713">
    <property type="entry name" value="Prot_inh_stefin"/>
</dbReference>
<dbReference type="PANTHER" id="PTHR11414">
    <property type="entry name" value="CYSTATIN FAMILY MEMBER"/>
    <property type="match status" value="1"/>
</dbReference>
<dbReference type="PANTHER" id="PTHR11414:SF26">
    <property type="entry name" value="STEFIN-3"/>
    <property type="match status" value="1"/>
</dbReference>
<dbReference type="Pfam" id="PF00031">
    <property type="entry name" value="Cystatin"/>
    <property type="match status" value="1"/>
</dbReference>
<dbReference type="PRINTS" id="PR00295">
    <property type="entry name" value="STEFINA"/>
</dbReference>
<dbReference type="SMART" id="SM00043">
    <property type="entry name" value="CY"/>
    <property type="match status" value="1"/>
</dbReference>
<dbReference type="SUPFAM" id="SSF54403">
    <property type="entry name" value="Cystatin/monellin"/>
    <property type="match status" value="1"/>
</dbReference>
<dbReference type="PROSITE" id="PS00287">
    <property type="entry name" value="CYSTATIN"/>
    <property type="match status" value="1"/>
</dbReference>
<feature type="chain" id="PRO_0000207129" description="Cystatin-A">
    <location>
        <begin position="1"/>
        <end position="103"/>
    </location>
</feature>
<feature type="short sequence motif" description="Secondary area of contact">
    <location>
        <begin position="52"/>
        <end position="56"/>
    </location>
</feature>
<feature type="site" description="Reactive site">
    <location>
        <position position="10"/>
    </location>
</feature>
<feature type="modified residue" description="N-acetylmethionine" evidence="1">
    <location>
        <position position="1"/>
    </location>
</feature>
<gene>
    <name type="primary">Csta</name>
</gene>
<proteinExistence type="evidence at protein level"/>
<sequence length="103" mass="11563">MDPGTTGIVGGVSEAKPATPEIQEVADKVKRQLEEKTNEKYEKFKVVEYKSQVVAGQILFMKVDVGNGRFLHMKVLRGLSGDDDLKLLDYQTNKTKNDELTDF</sequence>
<name>CYTA_RAT</name>